<proteinExistence type="evidence at protein level"/>
<feature type="signal peptide" evidence="5">
    <location>
        <begin position="1"/>
        <end position="26"/>
    </location>
</feature>
<feature type="chain" id="PRO_0000017160" description="Lipopolysaccharide-binding protein">
    <location>
        <begin position="27"/>
        <end position="482"/>
    </location>
</feature>
<feature type="glycosylation site" description="N-linked (GlcNAc...) asparagine" evidence="3">
    <location>
        <position position="301"/>
    </location>
</feature>
<feature type="glycosylation site" description="N-linked (GlcNAc...) asparagine" evidence="3">
    <location>
        <position position="351"/>
    </location>
</feature>
<feature type="glycosylation site" description="N-linked (GlcNAc...) asparagine" evidence="3">
    <location>
        <position position="387"/>
    </location>
</feature>
<feature type="disulfide bond" evidence="2">
    <location>
        <begin position="160"/>
        <end position="199"/>
    </location>
</feature>
<feature type="sequence conflict" description="In Ref. 2; AA sequence." evidence="6" ref="2">
    <original>E</original>
    <variation>G</variation>
    <location>
        <position position="57"/>
    </location>
</feature>
<feature type="sequence conflict" description="In Ref. 2; AA sequence." evidence="6" ref="2">
    <original>S</original>
    <variation>F</variation>
    <location>
        <position position="63"/>
    </location>
</feature>
<reference key="1">
    <citation type="journal article" date="1990" name="Science">
        <title>Structure and function of lipopolysaccharide binding protein.</title>
        <authorList>
            <person name="Schumann R.R."/>
            <person name="Leong S.R."/>
            <person name="Flaggs G.W."/>
            <person name="Gray P.W."/>
            <person name="Wright S.D."/>
            <person name="Mathison J.C."/>
            <person name="Tobias P.S."/>
            <person name="Ulevitch R.J."/>
        </authorList>
    </citation>
    <scope>NUCLEOTIDE SEQUENCE [MRNA]</scope>
    <scope>FUNCTION</scope>
    <scope>SUBCELLULAR LOCATION</scope>
    <scope>TISSUE SPECIFICITY</scope>
</reference>
<reference key="2">
    <citation type="journal article" date="1986" name="J. Exp. Med.">
        <title>Isolation of a lipopolysaccharide-binding acute phase reactant from rabbit serum.</title>
        <authorList>
            <person name="Tobias P.S."/>
            <person name="Soldau K."/>
            <person name="Ulevitch R.J."/>
        </authorList>
    </citation>
    <scope>PROTEIN SEQUENCE OF 27-66</scope>
    <scope>SUBCELLULAR LOCATION</scope>
    <scope>FUNCTION</scope>
    <scope>TISSUE SPECIFICITY</scope>
    <source>
        <tissue>Serum</tissue>
    </source>
</reference>
<organism>
    <name type="scientific">Oryctolagus cuniculus</name>
    <name type="common">Rabbit</name>
    <dbReference type="NCBI Taxonomy" id="9986"/>
    <lineage>
        <taxon>Eukaryota</taxon>
        <taxon>Metazoa</taxon>
        <taxon>Chordata</taxon>
        <taxon>Craniata</taxon>
        <taxon>Vertebrata</taxon>
        <taxon>Euteleostomi</taxon>
        <taxon>Mammalia</taxon>
        <taxon>Eutheria</taxon>
        <taxon>Euarchontoglires</taxon>
        <taxon>Glires</taxon>
        <taxon>Lagomorpha</taxon>
        <taxon>Leporidae</taxon>
        <taxon>Oryctolagus</taxon>
    </lineage>
</organism>
<dbReference type="EMBL" id="M35534">
    <property type="protein sequence ID" value="AAA99235.1"/>
    <property type="molecule type" value="mRNA"/>
</dbReference>
<dbReference type="PIR" id="B35843">
    <property type="entry name" value="B35843"/>
</dbReference>
<dbReference type="SMR" id="P17454"/>
<dbReference type="FunCoup" id="P17454">
    <property type="interactions" value="11"/>
</dbReference>
<dbReference type="STRING" id="9986.ENSOCUP00000049740"/>
<dbReference type="GlyCosmos" id="P17454">
    <property type="glycosylation" value="3 sites, No reported glycans"/>
</dbReference>
<dbReference type="PaxDb" id="9986-ENSOCUP00000011712"/>
<dbReference type="eggNOG" id="KOG4160">
    <property type="taxonomic scope" value="Eukaryota"/>
</dbReference>
<dbReference type="InParanoid" id="P17454"/>
<dbReference type="Proteomes" id="UP000001811">
    <property type="component" value="Unplaced"/>
</dbReference>
<dbReference type="GO" id="GO:0005615">
    <property type="term" value="C:extracellular space"/>
    <property type="evidence" value="ECO:0000314"/>
    <property type="project" value="BHF-UCL"/>
</dbReference>
<dbReference type="GO" id="GO:0001530">
    <property type="term" value="F:lipopolysaccharide binding"/>
    <property type="evidence" value="ECO:0000314"/>
    <property type="project" value="BHF-UCL"/>
</dbReference>
<dbReference type="GO" id="GO:0005102">
    <property type="term" value="F:signaling receptor binding"/>
    <property type="evidence" value="ECO:0000314"/>
    <property type="project" value="BHF-UCL"/>
</dbReference>
<dbReference type="GO" id="GO:0006953">
    <property type="term" value="P:acute-phase response"/>
    <property type="evidence" value="ECO:0000314"/>
    <property type="project" value="BHF-UCL"/>
</dbReference>
<dbReference type="GO" id="GO:0006968">
    <property type="term" value="P:cellular defense response"/>
    <property type="evidence" value="ECO:0000314"/>
    <property type="project" value="BHF-UCL"/>
</dbReference>
<dbReference type="GO" id="GO:0050829">
    <property type="term" value="P:defense response to Gram-negative bacterium"/>
    <property type="evidence" value="ECO:0000314"/>
    <property type="project" value="BHF-UCL"/>
</dbReference>
<dbReference type="GO" id="GO:0050830">
    <property type="term" value="P:defense response to Gram-positive bacterium"/>
    <property type="evidence" value="ECO:0007669"/>
    <property type="project" value="TreeGrafter"/>
</dbReference>
<dbReference type="GO" id="GO:0045087">
    <property type="term" value="P:innate immune response"/>
    <property type="evidence" value="ECO:0000314"/>
    <property type="project" value="BHF-UCL"/>
</dbReference>
<dbReference type="GO" id="GO:0006869">
    <property type="term" value="P:lipid transport"/>
    <property type="evidence" value="ECO:0007669"/>
    <property type="project" value="UniProtKB-KW"/>
</dbReference>
<dbReference type="GO" id="GO:0031663">
    <property type="term" value="P:lipopolysaccharide-mediated signaling pathway"/>
    <property type="evidence" value="ECO:0007669"/>
    <property type="project" value="TreeGrafter"/>
</dbReference>
<dbReference type="GO" id="GO:0002281">
    <property type="term" value="P:macrophage activation involved in immune response"/>
    <property type="evidence" value="ECO:0000314"/>
    <property type="project" value="BHF-UCL"/>
</dbReference>
<dbReference type="GO" id="GO:0008228">
    <property type="term" value="P:opsonization"/>
    <property type="evidence" value="ECO:0000314"/>
    <property type="project" value="BHF-UCL"/>
</dbReference>
<dbReference type="GO" id="GO:0043032">
    <property type="term" value="P:positive regulation of macrophage activation"/>
    <property type="evidence" value="ECO:0007669"/>
    <property type="project" value="TreeGrafter"/>
</dbReference>
<dbReference type="GO" id="GO:0032760">
    <property type="term" value="P:positive regulation of tumor necrosis factor production"/>
    <property type="evidence" value="ECO:0000314"/>
    <property type="project" value="BHF-UCL"/>
</dbReference>
<dbReference type="CDD" id="cd00025">
    <property type="entry name" value="BPI1"/>
    <property type="match status" value="1"/>
</dbReference>
<dbReference type="CDD" id="cd00026">
    <property type="entry name" value="BPI2"/>
    <property type="match status" value="1"/>
</dbReference>
<dbReference type="FunFam" id="3.15.20.10:FF:000001">
    <property type="entry name" value="Phospholipid transfer protein"/>
    <property type="match status" value="1"/>
</dbReference>
<dbReference type="FunFam" id="3.15.10.10:FF:000001">
    <property type="entry name" value="phospholipid transfer protein-like"/>
    <property type="match status" value="1"/>
</dbReference>
<dbReference type="Gene3D" id="3.15.10.10">
    <property type="entry name" value="Bactericidal permeability-increasing protein, domain 1"/>
    <property type="match status" value="1"/>
</dbReference>
<dbReference type="Gene3D" id="3.15.20.10">
    <property type="entry name" value="Bactericidal permeability-increasing protein, domain 2"/>
    <property type="match status" value="1"/>
</dbReference>
<dbReference type="InterPro" id="IPR017943">
    <property type="entry name" value="Bactericidal_perm-incr_a/b_dom"/>
</dbReference>
<dbReference type="InterPro" id="IPR030675">
    <property type="entry name" value="BPI/LBP"/>
</dbReference>
<dbReference type="InterPro" id="IPR032942">
    <property type="entry name" value="BPI/LBP/Plunc"/>
</dbReference>
<dbReference type="InterPro" id="IPR001124">
    <property type="entry name" value="Lipid-bd_serum_glycop_C"/>
</dbReference>
<dbReference type="InterPro" id="IPR017954">
    <property type="entry name" value="Lipid-bd_serum_glycop_CS"/>
</dbReference>
<dbReference type="InterPro" id="IPR017942">
    <property type="entry name" value="Lipid-bd_serum_glycop_N"/>
</dbReference>
<dbReference type="PANTHER" id="PTHR10504">
    <property type="entry name" value="BACTERICIDAL PERMEABILITY-INCREASING BPI PROTEIN-RELATED"/>
    <property type="match status" value="1"/>
</dbReference>
<dbReference type="PANTHER" id="PTHR10504:SF66">
    <property type="entry name" value="LIPOPOLYSACCHARIDE-BINDING PROTEIN"/>
    <property type="match status" value="1"/>
</dbReference>
<dbReference type="Pfam" id="PF01273">
    <property type="entry name" value="LBP_BPI_CETP"/>
    <property type="match status" value="1"/>
</dbReference>
<dbReference type="Pfam" id="PF02886">
    <property type="entry name" value="LBP_BPI_CETP_C"/>
    <property type="match status" value="1"/>
</dbReference>
<dbReference type="PIRSF" id="PIRSF002417">
    <property type="entry name" value="Lipid_binding_protein"/>
    <property type="match status" value="1"/>
</dbReference>
<dbReference type="SMART" id="SM00328">
    <property type="entry name" value="BPI1"/>
    <property type="match status" value="1"/>
</dbReference>
<dbReference type="SMART" id="SM00329">
    <property type="entry name" value="BPI2"/>
    <property type="match status" value="1"/>
</dbReference>
<dbReference type="SUPFAM" id="SSF55394">
    <property type="entry name" value="Bactericidal permeability-increasing protein, BPI"/>
    <property type="match status" value="2"/>
</dbReference>
<dbReference type="PROSITE" id="PS00400">
    <property type="entry name" value="LBP_BPI_CETP"/>
    <property type="match status" value="1"/>
</dbReference>
<name>LBP_RABIT</name>
<comment type="function">
    <text evidence="1 4 5">Plays a role in the innate immune response (PubMed:2402637). Binds to the lipid A moiety of bacterial lipopolysaccharides (LPS), a glycolipid present in the outer membrane of all Gram-negative bacteria (PubMed:2427635). Acts as an affinity enhancer for CD14, facilitating its association with LPS (By similarity). Promotes the release of cytokines in response to bacterial lipopolysaccharide (PubMed:2402637).</text>
</comment>
<comment type="subunit">
    <text evidence="1">When bound to LPS, interacts (via C-terminus) with soluble and membrane-bound CD14.</text>
</comment>
<comment type="subcellular location">
    <subcellularLocation>
        <location evidence="4 5">Secreted</location>
    </subcellularLocation>
</comment>
<comment type="tissue specificity">
    <text evidence="4 5">Detected in blood plasma (at protein level).</text>
</comment>
<comment type="similarity">
    <text evidence="6">Belongs to the BPI/LBP/Plunc superfamily. BPI/LBP family.</text>
</comment>
<evidence type="ECO:0000250" key="1">
    <source>
        <dbReference type="UniProtKB" id="P18428"/>
    </source>
</evidence>
<evidence type="ECO:0000250" key="2">
    <source>
        <dbReference type="UniProtKB" id="Q61805"/>
    </source>
</evidence>
<evidence type="ECO:0000255" key="3"/>
<evidence type="ECO:0000269" key="4">
    <source>
    </source>
</evidence>
<evidence type="ECO:0000269" key="5">
    <source>
    </source>
</evidence>
<evidence type="ECO:0000305" key="6"/>
<gene>
    <name type="primary">LBP</name>
</gene>
<protein>
    <recommendedName>
        <fullName>Lipopolysaccharide-binding protein</fullName>
        <shortName>LBP</shortName>
    </recommendedName>
</protein>
<keyword id="KW-0044">Antibiotic</keyword>
<keyword id="KW-0929">Antimicrobial</keyword>
<keyword id="KW-0903">Direct protein sequencing</keyword>
<keyword id="KW-1015">Disulfide bond</keyword>
<keyword id="KW-0325">Glycoprotein</keyword>
<keyword id="KW-0391">Immunity</keyword>
<keyword id="KW-0399">Innate immunity</keyword>
<keyword id="KW-0445">Lipid transport</keyword>
<keyword id="KW-1185">Reference proteome</keyword>
<keyword id="KW-0964">Secreted</keyword>
<keyword id="KW-0732">Signal</keyword>
<keyword id="KW-0813">Transport</keyword>
<sequence>MGTWARALLGSTLLSLLLAAAPGALGTNPGLITRITDKGLEYAAREGLLALQRKLLEVTLPDSDGDFRIKHFGRAQYKFYSLKIPRFELLRGTLRPLPGQGLSLDISDAYIHVRGSWKVRKAFLRLKNSFDLYVKGLTISVHLVLGSESSGRPTVTTSSCSSDIQNVELDIEGDLEELLNLLQSQIDARLREVLESKICRQIEEAVTAHLQPYLQTLPVTTQIDSFAGIDYSLMEAPRATAGMLDVMFKGEIFPLDHRSPVDFLAPAMNLPEAHSRMVYFSISDYVFNTASLAYHKSGYWNFSITDAMVPADLNIRRTTKSFRPFVPLLANLYPNMNLELQGTVNSEQLVNLSTENLLEEPEMDIEALVVLPSSAREPVFRLGVATNVSATLTLNTRKITGFLKPGRLQVELKESKVGGFNVELLEALLNYYILNNLYPKVNEKLAHRFPLPLLRHIQLYDLLLQTHENFLLVGANIQYRRV</sequence>
<accession>P17454</accession>